<protein>
    <recommendedName>
        <fullName evidence="1">Cytoplasmic tRNA 2-thiolation protein 1</fullName>
        <ecNumber evidence="1">2.7.7.-</ecNumber>
    </recommendedName>
    <alternativeName>
        <fullName evidence="1">Cytoplasmic tRNA adenylyltransferase 1</fullName>
    </alternativeName>
    <alternativeName>
        <fullName evidence="1">Thiolation of uridine in tRNA protein 1</fullName>
    </alternativeName>
</protein>
<sequence>MEKRRGPPPCQSGSGCSNPAKIRKAKDGAQLCGPCFSRNFEDDVHEAIVNNKLFKRGERVAIGASGGKDSTVLAYVMKTLNDRHDYGLDLQLLSIDEGIKGYRDDSLLAVEKNRVEYGLPLTILSYRDLYGWTMDDIVAKIGKKNNCTFCGVFRRQALDRGAFKIGATKLVTGHNADDMAETLLMNVLRGDIARLERCTNIVTGEEGDLPRAKPLKYCFERDIVMYARTNQLEYFYTECIYAPNAYRGYARKYVRDLEKVHPRAILDLIRSGEKVSVKKEVEMPTLKICERCGYMTSQKLCKACLLIEGLNTGNTDLGVRKSKKSKKVTVEADELNKEGGCGSGGGGGGCGCAGAEDAAENEETRQRLKDLQF</sequence>
<name>CTU1_CAEEL</name>
<organism>
    <name type="scientific">Caenorhabditis elegans</name>
    <dbReference type="NCBI Taxonomy" id="6239"/>
    <lineage>
        <taxon>Eukaryota</taxon>
        <taxon>Metazoa</taxon>
        <taxon>Ecdysozoa</taxon>
        <taxon>Nematoda</taxon>
        <taxon>Chromadorea</taxon>
        <taxon>Rhabditida</taxon>
        <taxon>Rhabditina</taxon>
        <taxon>Rhabditomorpha</taxon>
        <taxon>Rhabditoidea</taxon>
        <taxon>Rhabditidae</taxon>
        <taxon>Peloderinae</taxon>
        <taxon>Caenorhabditis</taxon>
    </lineage>
</organism>
<dbReference type="EC" id="2.7.7.-" evidence="1"/>
<dbReference type="EMBL" id="FO080227">
    <property type="protein sequence ID" value="CCD62179.1"/>
    <property type="molecule type" value="Genomic_DNA"/>
</dbReference>
<dbReference type="PIR" id="T33145">
    <property type="entry name" value="T33145"/>
</dbReference>
<dbReference type="RefSeq" id="NP_499865.1">
    <property type="nucleotide sequence ID" value="NM_067464.5"/>
</dbReference>
<dbReference type="SMR" id="O76365"/>
<dbReference type="BioGRID" id="41989">
    <property type="interactions" value="2"/>
</dbReference>
<dbReference type="FunCoup" id="O76365">
    <property type="interactions" value="1404"/>
</dbReference>
<dbReference type="STRING" id="6239.F29C4.6.1"/>
<dbReference type="PaxDb" id="6239-F29C4.6.1"/>
<dbReference type="PeptideAtlas" id="O76365"/>
<dbReference type="EnsemblMetazoa" id="F29C4.6.1">
    <property type="protein sequence ID" value="F29C4.6.1"/>
    <property type="gene ID" value="WBGene00017928"/>
</dbReference>
<dbReference type="EnsemblMetazoa" id="F29C4.6.2">
    <property type="protein sequence ID" value="F29C4.6.2"/>
    <property type="gene ID" value="WBGene00017928"/>
</dbReference>
<dbReference type="GeneID" id="176826"/>
<dbReference type="KEGG" id="cel:CELE_F29C4.6"/>
<dbReference type="UCSC" id="F29C4.6.1">
    <property type="organism name" value="c. elegans"/>
</dbReference>
<dbReference type="AGR" id="WB:WBGene00017928"/>
<dbReference type="CTD" id="176826"/>
<dbReference type="WormBase" id="F29C4.6">
    <property type="protein sequence ID" value="CE17723"/>
    <property type="gene ID" value="WBGene00017928"/>
    <property type="gene designation" value="tut-1"/>
</dbReference>
<dbReference type="eggNOG" id="KOG2840">
    <property type="taxonomic scope" value="Eukaryota"/>
</dbReference>
<dbReference type="GeneTree" id="ENSGT00390000001041"/>
<dbReference type="HOGENOM" id="CLU_026481_1_2_1"/>
<dbReference type="InParanoid" id="O76365"/>
<dbReference type="OMA" id="KPVRGIC"/>
<dbReference type="OrthoDB" id="198857at2759"/>
<dbReference type="PhylomeDB" id="O76365"/>
<dbReference type="UniPathway" id="UPA00988"/>
<dbReference type="PRO" id="PR:O76365"/>
<dbReference type="Proteomes" id="UP000001940">
    <property type="component" value="Chromosome IV"/>
</dbReference>
<dbReference type="Bgee" id="WBGene00017928">
    <property type="expression patterns" value="Expressed in germ line (C elegans) and 4 other cell types or tissues"/>
</dbReference>
<dbReference type="GO" id="GO:0005829">
    <property type="term" value="C:cytosol"/>
    <property type="evidence" value="ECO:0000250"/>
    <property type="project" value="UniProtKB"/>
</dbReference>
<dbReference type="GO" id="GO:0002144">
    <property type="term" value="C:cytosolic tRNA wobble base thiouridylase complex"/>
    <property type="evidence" value="ECO:0000318"/>
    <property type="project" value="GO_Central"/>
</dbReference>
<dbReference type="GO" id="GO:0016779">
    <property type="term" value="F:nucleotidyltransferase activity"/>
    <property type="evidence" value="ECO:0007669"/>
    <property type="project" value="UniProtKB-UniRule"/>
</dbReference>
<dbReference type="GO" id="GO:0016783">
    <property type="term" value="F:sulfurtransferase activity"/>
    <property type="evidence" value="ECO:0000315"/>
    <property type="project" value="WormBase"/>
</dbReference>
<dbReference type="GO" id="GO:0000049">
    <property type="term" value="F:tRNA binding"/>
    <property type="evidence" value="ECO:0000314"/>
    <property type="project" value="WormBase"/>
</dbReference>
<dbReference type="GO" id="GO:0048598">
    <property type="term" value="P:embryonic morphogenesis"/>
    <property type="evidence" value="ECO:0000316"/>
    <property type="project" value="WormBase"/>
</dbReference>
<dbReference type="GO" id="GO:0048599">
    <property type="term" value="P:oocyte development"/>
    <property type="evidence" value="ECO:0000316"/>
    <property type="project" value="WormBase"/>
</dbReference>
<dbReference type="GO" id="GO:0032447">
    <property type="term" value="P:protein urmylation"/>
    <property type="evidence" value="ECO:0007669"/>
    <property type="project" value="UniProtKB-UniRule"/>
</dbReference>
<dbReference type="GO" id="GO:0007283">
    <property type="term" value="P:spermatogenesis"/>
    <property type="evidence" value="ECO:0000316"/>
    <property type="project" value="WormBase"/>
</dbReference>
<dbReference type="GO" id="GO:0006412">
    <property type="term" value="P:translation"/>
    <property type="evidence" value="ECO:0000315"/>
    <property type="project" value="WormBase"/>
</dbReference>
<dbReference type="GO" id="GO:0034227">
    <property type="term" value="P:tRNA thio-modification"/>
    <property type="evidence" value="ECO:0000315"/>
    <property type="project" value="WormBase"/>
</dbReference>
<dbReference type="GO" id="GO:0002143">
    <property type="term" value="P:tRNA wobble position uridine thiolation"/>
    <property type="evidence" value="ECO:0000318"/>
    <property type="project" value="GO_Central"/>
</dbReference>
<dbReference type="GO" id="GO:0002098">
    <property type="term" value="P:tRNA wobble uridine modification"/>
    <property type="evidence" value="ECO:0000315"/>
    <property type="project" value="WormBase"/>
</dbReference>
<dbReference type="GO" id="GO:0040025">
    <property type="term" value="P:vulval development"/>
    <property type="evidence" value="ECO:0000316"/>
    <property type="project" value="WormBase"/>
</dbReference>
<dbReference type="CDD" id="cd01713">
    <property type="entry name" value="CTU1-like"/>
    <property type="match status" value="1"/>
</dbReference>
<dbReference type="FunFam" id="3.40.50.620:FF:000132">
    <property type="entry name" value="Cytoplasmic tRNA 2-thiolation protein 1"/>
    <property type="match status" value="1"/>
</dbReference>
<dbReference type="Gene3D" id="3.40.50.620">
    <property type="entry name" value="HUPs"/>
    <property type="match status" value="1"/>
</dbReference>
<dbReference type="HAMAP" id="MF_03053">
    <property type="entry name" value="CTU1"/>
    <property type="match status" value="1"/>
</dbReference>
<dbReference type="InterPro" id="IPR056369">
    <property type="entry name" value="CTU1-like_ATP-bd"/>
</dbReference>
<dbReference type="InterPro" id="IPR032442">
    <property type="entry name" value="CTU1_C"/>
</dbReference>
<dbReference type="InterPro" id="IPR000541">
    <property type="entry name" value="Ncs6/Tuc1/Ctu1"/>
</dbReference>
<dbReference type="InterPro" id="IPR014729">
    <property type="entry name" value="Rossmann-like_a/b/a_fold"/>
</dbReference>
<dbReference type="InterPro" id="IPR011063">
    <property type="entry name" value="TilS/TtcA_N"/>
</dbReference>
<dbReference type="InterPro" id="IPR035107">
    <property type="entry name" value="tRNA_thiolation_TtcA_Ctu1"/>
</dbReference>
<dbReference type="NCBIfam" id="TIGR00269">
    <property type="entry name" value="TIGR00269 family protein"/>
    <property type="match status" value="1"/>
</dbReference>
<dbReference type="PANTHER" id="PTHR11807">
    <property type="entry name" value="ATPASES OF THE PP SUPERFAMILY-RELATED"/>
    <property type="match status" value="1"/>
</dbReference>
<dbReference type="PANTHER" id="PTHR11807:SF12">
    <property type="entry name" value="CYTOPLASMIC TRNA 2-THIOLATION PROTEIN 1"/>
    <property type="match status" value="1"/>
</dbReference>
<dbReference type="Pfam" id="PF01171">
    <property type="entry name" value="ATP_bind_3"/>
    <property type="match status" value="1"/>
</dbReference>
<dbReference type="Pfam" id="PF16503">
    <property type="entry name" value="zn-ribbon_14"/>
    <property type="match status" value="1"/>
</dbReference>
<dbReference type="PIRSF" id="PIRSF004976">
    <property type="entry name" value="ATPase_YdaO"/>
    <property type="match status" value="1"/>
</dbReference>
<dbReference type="SUPFAM" id="SSF52402">
    <property type="entry name" value="Adenine nucleotide alpha hydrolases-like"/>
    <property type="match status" value="1"/>
</dbReference>
<feature type="chain" id="PRO_0000368239" description="Cytoplasmic tRNA 2-thiolation protein 1">
    <location>
        <begin position="1"/>
        <end position="373"/>
    </location>
</feature>
<gene>
    <name evidence="1" type="primary">tut-1</name>
    <name evidence="1" type="synonym">ctu-1</name>
    <name type="ORF">F29C4.6</name>
</gene>
<evidence type="ECO:0000255" key="1">
    <source>
        <dbReference type="HAMAP-Rule" id="MF_03053"/>
    </source>
</evidence>
<evidence type="ECO:0000269" key="2">
    <source>
    </source>
</evidence>
<keyword id="KW-0963">Cytoplasm</keyword>
<keyword id="KW-1185">Reference proteome</keyword>
<keyword id="KW-0694">RNA-binding</keyword>
<keyword id="KW-0808">Transferase</keyword>
<keyword id="KW-0819">tRNA processing</keyword>
<keyword id="KW-0820">tRNA-binding</keyword>
<proteinExistence type="evidence at protein level"/>
<comment type="function">
    <text evidence="1 2">Plays a central role in 2-thiolation of mcm(5)S(2)U at tRNA wobble positions of tRNA(Lys), tRNA(Glu) and tRNA(Gln). Directly binds tRNAs and probably acts by catalyzing adenylation of tRNAs, an intermediate required for 2-thiolation. It is unclear whether it acts as a sulfurtransferase that transfers sulfur from thiocarboxylated URM1 onto the uridine of tRNAs at wobble position.</text>
</comment>
<comment type="pathway">
    <text evidence="1">tRNA modification; 5-methoxycarbonylmethyl-2-thiouridine-tRNA biosynthesis.</text>
</comment>
<comment type="subcellular location">
    <subcellularLocation>
        <location evidence="1">Cytoplasm</location>
    </subcellularLocation>
</comment>
<comment type="disruption phenotype">
    <text evidence="2">Required for normal germline maturation and for viability. Viable at 20 degrees Celsius. At a higher temperature (25 degrees Celsius), the hatched eggs progress through the L1-L4 larval stages with kinetics similar to those of wild type but present an important delay in germline maturation. Whereas gravid wild-type worms are present 53 hours after hatching, germline maturation are still ongoing in the mutant after 66 hours, and the first adults containing eggs are observed 75 hours after hatching, when a large number of new L1 are already present in the wild type. Strikingly, the eggs that finally appeared in the mutant display aberrant morphology and size resulting in both low progeny and high mortality.</text>
</comment>
<comment type="similarity">
    <text evidence="1">Belongs to the TtcA family. CTU1/NCS6/ATPBD3 subfamily.</text>
</comment>
<accession>O76365</accession>
<reference key="1">
    <citation type="journal article" date="1998" name="Science">
        <title>Genome sequence of the nematode C. elegans: a platform for investigating biology.</title>
        <authorList>
            <consortium name="The C. elegans sequencing consortium"/>
        </authorList>
    </citation>
    <scope>NUCLEOTIDE SEQUENCE [LARGE SCALE GENOMIC DNA]</scope>
    <source>
        <strain>Bristol N2</strain>
    </source>
</reference>
<reference key="2">
    <citation type="journal article" date="2008" name="Proc. Natl. Acad. Sci. U.S.A.">
        <title>The conserved wobble uridine tRNA thiolase Ctu1-Ctu2 is required to maintain genome integrity.</title>
        <authorList>
            <person name="Dewez M."/>
            <person name="Bauer F."/>
            <person name="Dieu M."/>
            <person name="Raes M."/>
            <person name="Vandenhaute J."/>
            <person name="Hermand D."/>
        </authorList>
    </citation>
    <scope>FUNCTION IN 2-THIOLATION OF TRNA</scope>
    <scope>DISRUPTION PHENOTYPE</scope>
</reference>
<reference key="3">
    <citation type="journal article" date="2009" name="Nature">
        <title>Ubiquitin-related modifier Urm1 acts as a sulphur carrier in thiolation of eukaryotic transfer RNA.</title>
        <authorList>
            <person name="Leidel S."/>
            <person name="Pedrioli P.G.A."/>
            <person name="Bucher T."/>
            <person name="Brost R."/>
            <person name="Costanzo M."/>
            <person name="Schmidt A."/>
            <person name="Aebersold R."/>
            <person name="Boone C."/>
            <person name="Hofmann K."/>
            <person name="Peter M."/>
        </authorList>
    </citation>
    <scope>TRNA-BINDING</scope>
</reference>